<organism>
    <name type="scientific">Mus musculus</name>
    <name type="common">Mouse</name>
    <dbReference type="NCBI Taxonomy" id="10090"/>
    <lineage>
        <taxon>Eukaryota</taxon>
        <taxon>Metazoa</taxon>
        <taxon>Chordata</taxon>
        <taxon>Craniata</taxon>
        <taxon>Vertebrata</taxon>
        <taxon>Euteleostomi</taxon>
        <taxon>Mammalia</taxon>
        <taxon>Eutheria</taxon>
        <taxon>Euarchontoglires</taxon>
        <taxon>Glires</taxon>
        <taxon>Rodentia</taxon>
        <taxon>Myomorpha</taxon>
        <taxon>Muroidea</taxon>
        <taxon>Muridae</taxon>
        <taxon>Murinae</taxon>
        <taxon>Mus</taxon>
        <taxon>Mus</taxon>
    </lineage>
</organism>
<gene>
    <name type="primary">Spsb4</name>
    <name type="synonym">Ssb4</name>
</gene>
<protein>
    <recommendedName>
        <fullName>SPRY domain-containing SOCS box protein 4</fullName>
        <shortName>SSB-4</shortName>
    </recommendedName>
</protein>
<feature type="chain" id="PRO_0000238478" description="SPRY domain-containing SOCS box protein 4">
    <location>
        <begin position="1"/>
        <end position="273"/>
    </location>
</feature>
<feature type="domain" description="B30.2/SPRY" evidence="4">
    <location>
        <begin position="34"/>
        <end position="233"/>
    </location>
</feature>
<feature type="domain" description="SOCS box" evidence="3">
    <location>
        <begin position="234"/>
        <end position="273"/>
    </location>
</feature>
<feature type="splice variant" id="VSP_018614" description="In isoform 2." evidence="8">
    <original>PEPLPLMDLCRRSIRSALGRQRLRDIGSLPLPQSLKNYLQYQ</original>
    <variation>RKCPSLGGQGCQDVLPGESWGEGERSK</variation>
    <location>
        <begin position="232"/>
        <end position="273"/>
    </location>
</feature>
<reference key="1">
    <citation type="submission" date="2002-08" db="EMBL/GenBank/DDBJ databases">
        <title>SOCS box proteins.</title>
        <authorList>
            <person name="Friedel E.J."/>
            <person name="Nicholson S.E."/>
            <person name="Nicola N.A."/>
            <person name="Kile B.T."/>
            <person name="Hilton D.J."/>
        </authorList>
    </citation>
    <scope>NUCLEOTIDE SEQUENCE [MRNA] (ISOFORM 1)</scope>
</reference>
<reference key="2">
    <citation type="journal article" date="2005" name="Science">
        <title>The transcriptional landscape of the mammalian genome.</title>
        <authorList>
            <person name="Carninci P."/>
            <person name="Kasukawa T."/>
            <person name="Katayama S."/>
            <person name="Gough J."/>
            <person name="Frith M.C."/>
            <person name="Maeda N."/>
            <person name="Oyama R."/>
            <person name="Ravasi T."/>
            <person name="Lenhard B."/>
            <person name="Wells C."/>
            <person name="Kodzius R."/>
            <person name="Shimokawa K."/>
            <person name="Bajic V.B."/>
            <person name="Brenner S.E."/>
            <person name="Batalov S."/>
            <person name="Forrest A.R."/>
            <person name="Zavolan M."/>
            <person name="Davis M.J."/>
            <person name="Wilming L.G."/>
            <person name="Aidinis V."/>
            <person name="Allen J.E."/>
            <person name="Ambesi-Impiombato A."/>
            <person name="Apweiler R."/>
            <person name="Aturaliya R.N."/>
            <person name="Bailey T.L."/>
            <person name="Bansal M."/>
            <person name="Baxter L."/>
            <person name="Beisel K.W."/>
            <person name="Bersano T."/>
            <person name="Bono H."/>
            <person name="Chalk A.M."/>
            <person name="Chiu K.P."/>
            <person name="Choudhary V."/>
            <person name="Christoffels A."/>
            <person name="Clutterbuck D.R."/>
            <person name="Crowe M.L."/>
            <person name="Dalla E."/>
            <person name="Dalrymple B.P."/>
            <person name="de Bono B."/>
            <person name="Della Gatta G."/>
            <person name="di Bernardo D."/>
            <person name="Down T."/>
            <person name="Engstrom P."/>
            <person name="Fagiolini M."/>
            <person name="Faulkner G."/>
            <person name="Fletcher C.F."/>
            <person name="Fukushima T."/>
            <person name="Furuno M."/>
            <person name="Futaki S."/>
            <person name="Gariboldi M."/>
            <person name="Georgii-Hemming P."/>
            <person name="Gingeras T.R."/>
            <person name="Gojobori T."/>
            <person name="Green R.E."/>
            <person name="Gustincich S."/>
            <person name="Harbers M."/>
            <person name="Hayashi Y."/>
            <person name="Hensch T.K."/>
            <person name="Hirokawa N."/>
            <person name="Hill D."/>
            <person name="Huminiecki L."/>
            <person name="Iacono M."/>
            <person name="Ikeo K."/>
            <person name="Iwama A."/>
            <person name="Ishikawa T."/>
            <person name="Jakt M."/>
            <person name="Kanapin A."/>
            <person name="Katoh M."/>
            <person name="Kawasawa Y."/>
            <person name="Kelso J."/>
            <person name="Kitamura H."/>
            <person name="Kitano H."/>
            <person name="Kollias G."/>
            <person name="Krishnan S.P."/>
            <person name="Kruger A."/>
            <person name="Kummerfeld S.K."/>
            <person name="Kurochkin I.V."/>
            <person name="Lareau L.F."/>
            <person name="Lazarevic D."/>
            <person name="Lipovich L."/>
            <person name="Liu J."/>
            <person name="Liuni S."/>
            <person name="McWilliam S."/>
            <person name="Madan Babu M."/>
            <person name="Madera M."/>
            <person name="Marchionni L."/>
            <person name="Matsuda H."/>
            <person name="Matsuzawa S."/>
            <person name="Miki H."/>
            <person name="Mignone F."/>
            <person name="Miyake S."/>
            <person name="Morris K."/>
            <person name="Mottagui-Tabar S."/>
            <person name="Mulder N."/>
            <person name="Nakano N."/>
            <person name="Nakauchi H."/>
            <person name="Ng P."/>
            <person name="Nilsson R."/>
            <person name="Nishiguchi S."/>
            <person name="Nishikawa S."/>
            <person name="Nori F."/>
            <person name="Ohara O."/>
            <person name="Okazaki Y."/>
            <person name="Orlando V."/>
            <person name="Pang K.C."/>
            <person name="Pavan W.J."/>
            <person name="Pavesi G."/>
            <person name="Pesole G."/>
            <person name="Petrovsky N."/>
            <person name="Piazza S."/>
            <person name="Reed J."/>
            <person name="Reid J.F."/>
            <person name="Ring B.Z."/>
            <person name="Ringwald M."/>
            <person name="Rost B."/>
            <person name="Ruan Y."/>
            <person name="Salzberg S.L."/>
            <person name="Sandelin A."/>
            <person name="Schneider C."/>
            <person name="Schoenbach C."/>
            <person name="Sekiguchi K."/>
            <person name="Semple C.A."/>
            <person name="Seno S."/>
            <person name="Sessa L."/>
            <person name="Sheng Y."/>
            <person name="Shibata Y."/>
            <person name="Shimada H."/>
            <person name="Shimada K."/>
            <person name="Silva D."/>
            <person name="Sinclair B."/>
            <person name="Sperling S."/>
            <person name="Stupka E."/>
            <person name="Sugiura K."/>
            <person name="Sultana R."/>
            <person name="Takenaka Y."/>
            <person name="Taki K."/>
            <person name="Tammoja K."/>
            <person name="Tan S.L."/>
            <person name="Tang S."/>
            <person name="Taylor M.S."/>
            <person name="Tegner J."/>
            <person name="Teichmann S.A."/>
            <person name="Ueda H.R."/>
            <person name="van Nimwegen E."/>
            <person name="Verardo R."/>
            <person name="Wei C.L."/>
            <person name="Yagi K."/>
            <person name="Yamanishi H."/>
            <person name="Zabarovsky E."/>
            <person name="Zhu S."/>
            <person name="Zimmer A."/>
            <person name="Hide W."/>
            <person name="Bult C."/>
            <person name="Grimmond S.M."/>
            <person name="Teasdale R.D."/>
            <person name="Liu E.T."/>
            <person name="Brusic V."/>
            <person name="Quackenbush J."/>
            <person name="Wahlestedt C."/>
            <person name="Mattick J.S."/>
            <person name="Hume D.A."/>
            <person name="Kai C."/>
            <person name="Sasaki D."/>
            <person name="Tomaru Y."/>
            <person name="Fukuda S."/>
            <person name="Kanamori-Katayama M."/>
            <person name="Suzuki M."/>
            <person name="Aoki J."/>
            <person name="Arakawa T."/>
            <person name="Iida J."/>
            <person name="Imamura K."/>
            <person name="Itoh M."/>
            <person name="Kato T."/>
            <person name="Kawaji H."/>
            <person name="Kawagashira N."/>
            <person name="Kawashima T."/>
            <person name="Kojima M."/>
            <person name="Kondo S."/>
            <person name="Konno H."/>
            <person name="Nakano K."/>
            <person name="Ninomiya N."/>
            <person name="Nishio T."/>
            <person name="Okada M."/>
            <person name="Plessy C."/>
            <person name="Shibata K."/>
            <person name="Shiraki T."/>
            <person name="Suzuki S."/>
            <person name="Tagami M."/>
            <person name="Waki K."/>
            <person name="Watahiki A."/>
            <person name="Okamura-Oho Y."/>
            <person name="Suzuki H."/>
            <person name="Kawai J."/>
            <person name="Hayashizaki Y."/>
        </authorList>
    </citation>
    <scope>NUCLEOTIDE SEQUENCE [LARGE SCALE MRNA] (ISOFORMS 1 AND 2)</scope>
    <source>
        <strain>C57BL/6J</strain>
        <tissue>Embryo</tissue>
        <tissue>Embryonic heart</tissue>
    </source>
</reference>
<reference key="3">
    <citation type="journal article" date="2004" name="Genome Res.">
        <title>The status, quality, and expansion of the NIH full-length cDNA project: the Mammalian Gene Collection (MGC).</title>
        <authorList>
            <consortium name="The MGC Project Team"/>
        </authorList>
    </citation>
    <scope>NUCLEOTIDE SEQUENCE [LARGE SCALE MRNA] (ISOFORM 1)</scope>
    <source>
        <strain>C57BL/6J</strain>
        <strain>FVB/N</strain>
        <tissue>Brain</tissue>
        <tissue>Mammary tumor</tissue>
    </source>
</reference>
<reference key="4">
    <citation type="journal article" date="2006" name="Nat. Struct. Mol. Biol.">
        <title>The SPRY domain of SSB-2 adopts a novel fold that presents conserved Par-4-binding residues.</title>
        <authorList>
            <person name="Masters S.L."/>
            <person name="Yao S."/>
            <person name="Willson T.A."/>
            <person name="Zhang J.-G."/>
            <person name="Palmer K.R."/>
            <person name="Smith B.J."/>
            <person name="Babon J.J."/>
            <person name="Nicola N.A."/>
            <person name="Norton R.S."/>
            <person name="Nicholson S.E."/>
        </authorList>
    </citation>
    <scope>INTERACTION WITH PAWR AND MET</scope>
</reference>
<reference key="5">
    <citation type="journal article" date="2010" name="J. Cell Biol.">
        <title>The SPRY domain-containing SOCS box protein SPSB2 targets iNOS for proteasomal degradation.</title>
        <authorList>
            <person name="Kuang Z."/>
            <person name="Lewis R.S."/>
            <person name="Curtis J.M."/>
            <person name="Zhan Y."/>
            <person name="Saunders B.M."/>
            <person name="Babon J.J."/>
            <person name="Kolesnik T.B."/>
            <person name="Low A."/>
            <person name="Masters S.L."/>
            <person name="Willson T.A."/>
            <person name="Kedzierski L."/>
            <person name="Yao S."/>
            <person name="Handman E."/>
            <person name="Norton R.S."/>
            <person name="Nicholson S.E."/>
        </authorList>
    </citation>
    <scope>INTERACTION WITH NOS2</scope>
</reference>
<reference key="6">
    <citation type="journal article" date="2010" name="J. Mol. Biol.">
        <title>Structural basis for Par-4 recognition by the SPRY domain- and SOCS box-containing proteins SPSB1, SPSB2, and SPSB4.</title>
        <authorList>
            <person name="Filippakopoulos P."/>
            <person name="Low A."/>
            <person name="Sharpe T.D."/>
            <person name="Uppenberg J."/>
            <person name="Yao S."/>
            <person name="Kuang Z."/>
            <person name="Savitsky P."/>
            <person name="Lewis R.S."/>
            <person name="Nicholson S.E."/>
            <person name="Norton R.S."/>
            <person name="Bullock A.N."/>
        </authorList>
    </citation>
    <scope>INTERACTION WITH PAWR</scope>
</reference>
<dbReference type="EMBL" id="AF403039">
    <property type="protein sequence ID" value="AAL57358.2"/>
    <property type="molecule type" value="mRNA"/>
</dbReference>
<dbReference type="EMBL" id="AK083698">
    <property type="protein sequence ID" value="BAC38995.1"/>
    <property type="molecule type" value="mRNA"/>
</dbReference>
<dbReference type="EMBL" id="AK142195">
    <property type="protein sequence ID" value="BAE24972.1"/>
    <property type="molecule type" value="mRNA"/>
</dbReference>
<dbReference type="EMBL" id="BC023083">
    <property type="protein sequence ID" value="AAH23083.1"/>
    <property type="molecule type" value="mRNA"/>
</dbReference>
<dbReference type="EMBL" id="BC055705">
    <property type="protein sequence ID" value="AAH55705.1"/>
    <property type="molecule type" value="mRNA"/>
</dbReference>
<dbReference type="EMBL" id="BC094332">
    <property type="protein sequence ID" value="AAH94332.1"/>
    <property type="molecule type" value="mRNA"/>
</dbReference>
<dbReference type="CCDS" id="CCDS23419.1">
    <molecule id="Q8R5B6-1"/>
</dbReference>
<dbReference type="RefSeq" id="NP_660116.1">
    <molecule id="Q8R5B6-1"/>
    <property type="nucleotide sequence ID" value="NM_145134.3"/>
</dbReference>
<dbReference type="SMR" id="Q8R5B6"/>
<dbReference type="BioGRID" id="229277">
    <property type="interactions" value="1"/>
</dbReference>
<dbReference type="DIP" id="DIP-29002N"/>
<dbReference type="FunCoup" id="Q8R5B6">
    <property type="interactions" value="169"/>
</dbReference>
<dbReference type="IntAct" id="Q8R5B6">
    <property type="interactions" value="1"/>
</dbReference>
<dbReference type="STRING" id="10090.ENSMUSP00000057849"/>
<dbReference type="PhosphoSitePlus" id="Q8R5B6"/>
<dbReference type="PaxDb" id="10090-ENSMUSP00000057849"/>
<dbReference type="ProteomicsDB" id="254540">
    <molecule id="Q8R5B6-1"/>
</dbReference>
<dbReference type="ProteomicsDB" id="254541">
    <molecule id="Q8R5B6-2"/>
</dbReference>
<dbReference type="Antibodypedia" id="77081">
    <property type="antibodies" value="12 antibodies from 8 providers"/>
</dbReference>
<dbReference type="Ensembl" id="ENSMUST00000055433.5">
    <molecule id="Q8R5B6-1"/>
    <property type="protein sequence ID" value="ENSMUSP00000057849.5"/>
    <property type="gene ID" value="ENSMUSG00000046997.6"/>
</dbReference>
<dbReference type="GeneID" id="211949"/>
<dbReference type="KEGG" id="mmu:211949"/>
<dbReference type="UCSC" id="uc009rcx.1">
    <molecule id="Q8R5B6-1"/>
    <property type="organism name" value="mouse"/>
</dbReference>
<dbReference type="UCSC" id="uc009rcy.1">
    <molecule id="Q8R5B6-2"/>
    <property type="organism name" value="mouse"/>
</dbReference>
<dbReference type="AGR" id="MGI:2183445"/>
<dbReference type="CTD" id="92369"/>
<dbReference type="MGI" id="MGI:2183445">
    <property type="gene designation" value="Spsb4"/>
</dbReference>
<dbReference type="VEuPathDB" id="HostDB:ENSMUSG00000046997"/>
<dbReference type="eggNOG" id="KOG3953">
    <property type="taxonomic scope" value="Eukaryota"/>
</dbReference>
<dbReference type="GeneTree" id="ENSGT01030000234629"/>
<dbReference type="HOGENOM" id="CLU_046756_0_1_1"/>
<dbReference type="InParanoid" id="Q8R5B6"/>
<dbReference type="OMA" id="HRPMAKE"/>
<dbReference type="OrthoDB" id="5547302at2759"/>
<dbReference type="PhylomeDB" id="Q8R5B6"/>
<dbReference type="TreeFam" id="TF312822"/>
<dbReference type="Reactome" id="R-MMU-8951664">
    <property type="pathway name" value="Neddylation"/>
</dbReference>
<dbReference type="Reactome" id="R-MMU-983168">
    <property type="pathway name" value="Antigen processing: Ubiquitination &amp; Proteasome degradation"/>
</dbReference>
<dbReference type="UniPathway" id="UPA00143"/>
<dbReference type="BioGRID-ORCS" id="211949">
    <property type="hits" value="3 hits in 78 CRISPR screens"/>
</dbReference>
<dbReference type="ChiTaRS" id="Spsb4">
    <property type="organism name" value="mouse"/>
</dbReference>
<dbReference type="PRO" id="PR:Q8R5B6"/>
<dbReference type="Proteomes" id="UP000000589">
    <property type="component" value="Chromosome 9"/>
</dbReference>
<dbReference type="RNAct" id="Q8R5B6">
    <property type="molecule type" value="protein"/>
</dbReference>
<dbReference type="Bgee" id="ENSMUSG00000046997">
    <property type="expression patterns" value="Expressed in floor plate of midbrain and 211 other cell types or tissues"/>
</dbReference>
<dbReference type="GO" id="GO:0005829">
    <property type="term" value="C:cytosol"/>
    <property type="evidence" value="ECO:0000250"/>
    <property type="project" value="UniProtKB"/>
</dbReference>
<dbReference type="GO" id="GO:1990756">
    <property type="term" value="F:ubiquitin-like ligase-substrate adaptor activity"/>
    <property type="evidence" value="ECO:0000250"/>
    <property type="project" value="UniProtKB"/>
</dbReference>
<dbReference type="GO" id="GO:0035556">
    <property type="term" value="P:intracellular signal transduction"/>
    <property type="evidence" value="ECO:0007669"/>
    <property type="project" value="InterPro"/>
</dbReference>
<dbReference type="GO" id="GO:1902916">
    <property type="term" value="P:positive regulation of protein polyubiquitination"/>
    <property type="evidence" value="ECO:0000250"/>
    <property type="project" value="UniProtKB"/>
</dbReference>
<dbReference type="GO" id="GO:0016567">
    <property type="term" value="P:protein ubiquitination"/>
    <property type="evidence" value="ECO:0000250"/>
    <property type="project" value="UniProtKB"/>
</dbReference>
<dbReference type="GO" id="GO:0042752">
    <property type="term" value="P:regulation of circadian rhythm"/>
    <property type="evidence" value="ECO:0007669"/>
    <property type="project" value="Ensembl"/>
</dbReference>
<dbReference type="GO" id="GO:0048511">
    <property type="term" value="P:rhythmic process"/>
    <property type="evidence" value="ECO:0007669"/>
    <property type="project" value="UniProtKB-KW"/>
</dbReference>
<dbReference type="GO" id="GO:0006511">
    <property type="term" value="P:ubiquitin-dependent protein catabolic process"/>
    <property type="evidence" value="ECO:0000250"/>
    <property type="project" value="UniProtKB"/>
</dbReference>
<dbReference type="CDD" id="cd12906">
    <property type="entry name" value="SPRY_SOCS1-2-4"/>
    <property type="match status" value="1"/>
</dbReference>
<dbReference type="FunFam" id="1.10.750.20:FF:000001">
    <property type="entry name" value="Ankyrin repeat and SOCS box containing 1"/>
    <property type="match status" value="1"/>
</dbReference>
<dbReference type="FunFam" id="2.60.120.920:FF:000007">
    <property type="entry name" value="SPRY domain-containing SOCS box protein 1"/>
    <property type="match status" value="1"/>
</dbReference>
<dbReference type="Gene3D" id="2.60.120.920">
    <property type="match status" value="1"/>
</dbReference>
<dbReference type="Gene3D" id="1.10.750.20">
    <property type="entry name" value="SOCS box"/>
    <property type="match status" value="1"/>
</dbReference>
<dbReference type="InterPro" id="IPR001870">
    <property type="entry name" value="B30.2/SPRY"/>
</dbReference>
<dbReference type="InterPro" id="IPR043136">
    <property type="entry name" value="B30.2/SPRY_sf"/>
</dbReference>
<dbReference type="InterPro" id="IPR013320">
    <property type="entry name" value="ConA-like_dom_sf"/>
</dbReference>
<dbReference type="InterPro" id="IPR050672">
    <property type="entry name" value="FBXO45-Fsn/SPSB_families"/>
</dbReference>
<dbReference type="InterPro" id="IPR001496">
    <property type="entry name" value="SOCS_box"/>
</dbReference>
<dbReference type="InterPro" id="IPR036036">
    <property type="entry name" value="SOCS_box-like_dom_sf"/>
</dbReference>
<dbReference type="InterPro" id="IPR003877">
    <property type="entry name" value="SPRY_dom"/>
</dbReference>
<dbReference type="PANTHER" id="PTHR12245">
    <property type="entry name" value="SPRY DOMAIN CONTAINING SOCS BOX PROTEIN"/>
    <property type="match status" value="1"/>
</dbReference>
<dbReference type="PANTHER" id="PTHR12245:SF3">
    <property type="entry name" value="SPRY DOMAIN-CONTAINING SOCS BOX PROTEIN 4"/>
    <property type="match status" value="1"/>
</dbReference>
<dbReference type="Pfam" id="PF07525">
    <property type="entry name" value="SOCS_box"/>
    <property type="match status" value="1"/>
</dbReference>
<dbReference type="Pfam" id="PF00622">
    <property type="entry name" value="SPRY"/>
    <property type="match status" value="1"/>
</dbReference>
<dbReference type="SMART" id="SM00969">
    <property type="entry name" value="SOCS_box"/>
    <property type="match status" value="1"/>
</dbReference>
<dbReference type="SMART" id="SM00449">
    <property type="entry name" value="SPRY"/>
    <property type="match status" value="1"/>
</dbReference>
<dbReference type="SUPFAM" id="SSF49899">
    <property type="entry name" value="Concanavalin A-like lectins/glucanases"/>
    <property type="match status" value="1"/>
</dbReference>
<dbReference type="SUPFAM" id="SSF158235">
    <property type="entry name" value="SOCS box-like"/>
    <property type="match status" value="1"/>
</dbReference>
<dbReference type="PROSITE" id="PS50188">
    <property type="entry name" value="B302_SPRY"/>
    <property type="match status" value="1"/>
</dbReference>
<dbReference type="PROSITE" id="PS50225">
    <property type="entry name" value="SOCS"/>
    <property type="match status" value="1"/>
</dbReference>
<proteinExistence type="evidence at protein level"/>
<comment type="function">
    <text evidence="2">Substrate recognition component of a SCF-like ECS (Elongin BC-CUL2/5-SOCS-box protein) E3 ubiquitin-protein ligase complex which mediates the ubiquitination and subsequent proteasomal degradation of target proteins (By similarity). Negatively regulates nitric oxide (NO) production and limits cellular toxicity in activated macrophages by mediating the ubiquitination and proteasomal degradation of NOS2 (By similarity). Acts as a bridge which links NOS2 with the ECS E3 ubiquitin ligase complex components ELOC and CUL5 (By similarity). Diminishes EphB2-dependent cell repulsive responses by mediating the ubiquitination and degradation of the EphB2/CTF2 (By similarity). Regulates cellular clock function by mediating ubiquitination and proteasomal degradation of the circadian transcriptional repressor NR1D1 (By similarity).</text>
</comment>
<comment type="pathway">
    <text>Protein modification; protein ubiquitination.</text>
</comment>
<comment type="subunit">
    <text evidence="2 5 6 7">Component of the probable ECS(SPSB4) E3 ubiquitin-protein ligase complex which contains CUL5, RNF7/RBX2, Elongin BC complex and SPSB4 (By similarity). Interacts with CUL5; RNF7; ELOB and ELOC (By similarity). Interacts with MET (PubMed:16369487). Interacts (via B30.2/SPRY domain) with PAWR; this interaction occurs in association with the Elongin BC complex (PubMed:16369487, PubMed:20561531). Interacts with NOS2 (PubMed:20603330). Interacts with EPHB2 (By similarity).</text>
</comment>
<comment type="interaction">
    <interactant intactId="EBI-8821982">
        <id>Q8R5B6</id>
    </interactant>
    <interactant intactId="EBI-595869">
        <id>Q96IZ0</id>
        <label>PAWR</label>
    </interactant>
    <organismsDiffer>true</organismsDiffer>
    <experiments>3</experiments>
</comment>
<comment type="subcellular location">
    <subcellularLocation>
        <location evidence="9">Cytoplasm</location>
    </subcellularLocation>
    <subcellularLocation>
        <location evidence="2">Cytoplasm</location>
        <location evidence="2">Cytosol</location>
    </subcellularLocation>
    <text evidence="2">Exhibits a diffuse cytosolic localization.</text>
</comment>
<comment type="alternative products">
    <event type="alternative splicing"/>
    <isoform>
        <id>Q8R5B6-1</id>
        <name>1</name>
        <sequence type="displayed"/>
    </isoform>
    <isoform>
        <id>Q8R5B6-2</id>
        <name>2</name>
        <sequence type="described" ref="VSP_018614"/>
    </isoform>
</comment>
<comment type="domain">
    <text evidence="1 2">The SOCS box domain mediates the interaction with the Elongin BC complex, an adapter module in different E3 ubiquitin ligase complexes (By similarity). Essential for its ability to link NOS2 and the ECS E3 ubiquitin ligase complex components ELOC and CUL5 (By similarity).</text>
</comment>
<comment type="similarity">
    <text evidence="9">Belongs to the SPSB family.</text>
</comment>
<name>SPSB4_MOUSE</name>
<keyword id="KW-0025">Alternative splicing</keyword>
<keyword id="KW-0090">Biological rhythms</keyword>
<keyword id="KW-0963">Cytoplasm</keyword>
<keyword id="KW-1185">Reference proteome</keyword>
<keyword id="KW-0833">Ubl conjugation pathway</keyword>
<sequence>MGQKLSGSLKSVEVREPALRPAKRELRGLEPGRPARLDQLLDMPAAGLAVQLRHAWNPEDRSLNVFVKDDDRLTFHRHPVAQSTDGIRGKVGHARGLHAWQIHWPARQRGTHAVVGVATARAPLHSVGYTALVGSDSESWGWDLGRSRLYHDGKNRPGVAYPAFLGPDEAFALPDSLLVVLDMDEGTLSFIVDGQYLGVAFRGLKGKKLYPVVSAVWGHCEVTMRYINGLDPEPLPLMDLCRRSIRSALGRQRLRDIGSLPLPQSLKNYLQYQ</sequence>
<accession>Q8R5B6</accession>
<accession>Q8BJI9</accession>
<accession>Q8VHS8</accession>
<evidence type="ECO:0000250" key="1"/>
<evidence type="ECO:0000250" key="2">
    <source>
        <dbReference type="UniProtKB" id="Q96A44"/>
    </source>
</evidence>
<evidence type="ECO:0000255" key="3">
    <source>
        <dbReference type="PROSITE-ProRule" id="PRU00194"/>
    </source>
</evidence>
<evidence type="ECO:0000255" key="4">
    <source>
        <dbReference type="PROSITE-ProRule" id="PRU00548"/>
    </source>
</evidence>
<evidence type="ECO:0000269" key="5">
    <source>
    </source>
</evidence>
<evidence type="ECO:0000269" key="6">
    <source>
    </source>
</evidence>
<evidence type="ECO:0000269" key="7">
    <source>
    </source>
</evidence>
<evidence type="ECO:0000303" key="8">
    <source>
    </source>
</evidence>
<evidence type="ECO:0000305" key="9"/>